<evidence type="ECO:0000250" key="1"/>
<evidence type="ECO:0000250" key="2">
    <source>
        <dbReference type="UniProtKB" id="Q9LPZ9"/>
    </source>
</evidence>
<evidence type="ECO:0000255" key="3"/>
<evidence type="ECO:0000255" key="4">
    <source>
        <dbReference type="PROSITE-ProRule" id="PRU00038"/>
    </source>
</evidence>
<evidence type="ECO:0000255" key="5">
    <source>
        <dbReference type="PROSITE-ProRule" id="PRU00159"/>
    </source>
</evidence>
<evidence type="ECO:0000255" key="6">
    <source>
        <dbReference type="PROSITE-ProRule" id="PRU00315"/>
    </source>
</evidence>
<evidence type="ECO:0000255" key="7">
    <source>
        <dbReference type="PROSITE-ProRule" id="PRU10027"/>
    </source>
</evidence>
<evidence type="ECO:0000303" key="8">
    <source ref="3"/>
</evidence>
<name>Y4119_ARATH</name>
<sequence length="849" mass="95816">MQICKKNVFLLYYGVLVFLSFQVSSSTDTISTNQPLSGFETIVSSGDIFELGLFTPTPDTYDHRNYYIGMWYRHVSPQTIVWVANRESPLGGDASTYLLKILDGNLILHDNISATRKSHTEGTSRRSPQKISEGNLLFHETVWSTGVNSSMSKDVQAVLFDSGNLVLRDGPNSSAAVLWQSFDHPSDTWLPGGKIRLGSQLFTSWESLIDPSPGRYSLEFDPKLHSLVTVWNRSKSYWSSGPLYDWLQSFKGFPELQGTKLSFTLNMDESYITFSVDPQSRYRLVMGVSGQFMLQVWHVDLQSWRVILSQPDNRCDVYNSCGSFGICNENREPPPCRCVPGFKREFSQGSDDSNDYSGGCKRETYLHCYKRNDEFLPIENMKLATDPTTASVLTSGTFRTCASRCVADCSCQAYANDGNKCLVWTKDAFNLQQLDANKGHTFFLRLASSNISTANNRKTEHSKGKSIVLPLVLASLVATAACFVGLYCCISSRIRRKKKQRDEKHSRELLEGGLIDDAGENMCYLNLHDIMVATNSFSRKKKLGEGGFGPVYKGKLPNGMEVAIKRLSKKSSQGLTEFKNEVVLIIKLQHKNLVRLLGYCVEGDEKLLIYEYMSNKSLDGLLFDSLKSRELDWETRMKIVNGTTRGLQYLHEYSRLRIIHRDLKASNILLDDEMNPKISDFGTARIFGCKQIDDSTQRIVGTFGYMSPEYALGGVISEKSDIYSFGVLLLEIISGKKATRFVHNDQKHSLIAYEWESWCETKGVSIIDEPMCCSYSLEEAMRCIHIALLCVQDHPKDRPMISQIVYMLSNDNTLPIPKQPTFSNVLNGDQQLDYVFSINEATQTELEAR</sequence>
<protein>
    <recommendedName>
        <fullName>G-type lectin S-receptor-like serine/threonine-protein kinase At4g11900</fullName>
        <ecNumber>2.7.11.1</ecNumber>
    </recommendedName>
</protein>
<accession>Q9T058</accession>
<accession>Q682D0</accession>
<dbReference type="EC" id="2.7.11.1"/>
<dbReference type="EMBL" id="AL078606">
    <property type="protein sequence ID" value="CAB44328.1"/>
    <property type="molecule type" value="Genomic_DNA"/>
</dbReference>
<dbReference type="EMBL" id="AL161533">
    <property type="protein sequence ID" value="CAB78233.1"/>
    <property type="molecule type" value="Genomic_DNA"/>
</dbReference>
<dbReference type="EMBL" id="CP002687">
    <property type="protein sequence ID" value="AEE83067.1"/>
    <property type="molecule type" value="Genomic_DNA"/>
</dbReference>
<dbReference type="EMBL" id="CP002687">
    <property type="protein sequence ID" value="ANM67245.1"/>
    <property type="molecule type" value="Genomic_DNA"/>
</dbReference>
<dbReference type="EMBL" id="CP002687">
    <property type="protein sequence ID" value="ANM67251.1"/>
    <property type="molecule type" value="Genomic_DNA"/>
</dbReference>
<dbReference type="EMBL" id="AK175437">
    <property type="protein sequence ID" value="BAD43200.1"/>
    <property type="molecule type" value="mRNA"/>
</dbReference>
<dbReference type="PIR" id="T09349">
    <property type="entry name" value="T09349"/>
</dbReference>
<dbReference type="RefSeq" id="NP_001329085.1">
    <molecule id="Q9T058-2"/>
    <property type="nucleotide sequence ID" value="NM_001340743.1"/>
</dbReference>
<dbReference type="RefSeq" id="NP_001329091.1">
    <molecule id="Q9T058-2"/>
    <property type="nucleotide sequence ID" value="NM_001340747.1"/>
</dbReference>
<dbReference type="RefSeq" id="NP_192927.5">
    <molecule id="Q9T058-1"/>
    <property type="nucleotide sequence ID" value="NM_117260.8"/>
</dbReference>
<dbReference type="SMR" id="Q9T058"/>
<dbReference type="FunCoup" id="Q9T058">
    <property type="interactions" value="18"/>
</dbReference>
<dbReference type="STRING" id="3702.Q9T058"/>
<dbReference type="GlyGen" id="Q9T058">
    <property type="glycosylation" value="5 sites"/>
</dbReference>
<dbReference type="PaxDb" id="3702-AT4G11900.1"/>
<dbReference type="ProteomicsDB" id="243190">
    <molecule id="Q9T058-1"/>
</dbReference>
<dbReference type="EnsemblPlants" id="AT4G11900.1">
    <molecule id="Q9T058-1"/>
    <property type="protein sequence ID" value="AT4G11900.1"/>
    <property type="gene ID" value="AT4G11900"/>
</dbReference>
<dbReference type="EnsemblPlants" id="AT4G11900.10">
    <molecule id="Q9T058-2"/>
    <property type="protein sequence ID" value="AT4G11900.10"/>
    <property type="gene ID" value="AT4G11900"/>
</dbReference>
<dbReference type="EnsemblPlants" id="AT4G11900.5">
    <molecule id="Q9T058-2"/>
    <property type="protein sequence ID" value="AT4G11900.5"/>
    <property type="gene ID" value="AT4G11900"/>
</dbReference>
<dbReference type="GeneID" id="826797"/>
<dbReference type="Gramene" id="AT4G11900.1">
    <molecule id="Q9T058-1"/>
    <property type="protein sequence ID" value="AT4G11900.1"/>
    <property type="gene ID" value="AT4G11900"/>
</dbReference>
<dbReference type="Gramene" id="AT4G11900.10">
    <molecule id="Q9T058-2"/>
    <property type="protein sequence ID" value="AT4G11900.10"/>
    <property type="gene ID" value="AT4G11900"/>
</dbReference>
<dbReference type="Gramene" id="AT4G11900.5">
    <molecule id="Q9T058-2"/>
    <property type="protein sequence ID" value="AT4G11900.5"/>
    <property type="gene ID" value="AT4G11900"/>
</dbReference>
<dbReference type="KEGG" id="ath:AT4G11900"/>
<dbReference type="Araport" id="AT4G11900"/>
<dbReference type="TAIR" id="AT4G11900"/>
<dbReference type="eggNOG" id="ENOG502RCRG">
    <property type="taxonomic scope" value="Eukaryota"/>
</dbReference>
<dbReference type="HOGENOM" id="CLU_000288_116_4_1"/>
<dbReference type="InParanoid" id="Q9T058"/>
<dbReference type="PhylomeDB" id="Q9T058"/>
<dbReference type="PRO" id="PR:Q9T058"/>
<dbReference type="Proteomes" id="UP000006548">
    <property type="component" value="Chromosome 4"/>
</dbReference>
<dbReference type="ExpressionAtlas" id="Q9T058">
    <property type="expression patterns" value="baseline and differential"/>
</dbReference>
<dbReference type="GO" id="GO:0005886">
    <property type="term" value="C:plasma membrane"/>
    <property type="evidence" value="ECO:0007669"/>
    <property type="project" value="UniProtKB-SubCell"/>
</dbReference>
<dbReference type="GO" id="GO:0005524">
    <property type="term" value="F:ATP binding"/>
    <property type="evidence" value="ECO:0007669"/>
    <property type="project" value="UniProtKB-KW"/>
</dbReference>
<dbReference type="GO" id="GO:0005516">
    <property type="term" value="F:calmodulin binding"/>
    <property type="evidence" value="ECO:0000250"/>
    <property type="project" value="UniProtKB"/>
</dbReference>
<dbReference type="GO" id="GO:0030246">
    <property type="term" value="F:carbohydrate binding"/>
    <property type="evidence" value="ECO:0007669"/>
    <property type="project" value="UniProtKB-KW"/>
</dbReference>
<dbReference type="GO" id="GO:0106310">
    <property type="term" value="F:protein serine kinase activity"/>
    <property type="evidence" value="ECO:0007669"/>
    <property type="project" value="RHEA"/>
</dbReference>
<dbReference type="GO" id="GO:0004674">
    <property type="term" value="F:protein serine/threonine kinase activity"/>
    <property type="evidence" value="ECO:0000250"/>
    <property type="project" value="UniProtKB"/>
</dbReference>
<dbReference type="GO" id="GO:0048544">
    <property type="term" value="P:recognition of pollen"/>
    <property type="evidence" value="ECO:0007669"/>
    <property type="project" value="InterPro"/>
</dbReference>
<dbReference type="CDD" id="cd00028">
    <property type="entry name" value="B_lectin"/>
    <property type="match status" value="1"/>
</dbReference>
<dbReference type="CDD" id="cd01098">
    <property type="entry name" value="PAN_AP_plant"/>
    <property type="match status" value="1"/>
</dbReference>
<dbReference type="CDD" id="cd14066">
    <property type="entry name" value="STKc_IRAK"/>
    <property type="match status" value="1"/>
</dbReference>
<dbReference type="FunFam" id="1.10.510.10:FF:000345">
    <property type="entry name" value="G-type lectin S-receptor-like serine/threonine-protein kinase"/>
    <property type="match status" value="1"/>
</dbReference>
<dbReference type="FunFam" id="3.30.200.20:FF:000418">
    <property type="entry name" value="G-type lectin S-receptor-like serine/threonine-protein kinase"/>
    <property type="match status" value="1"/>
</dbReference>
<dbReference type="FunFam" id="2.90.10.10:FF:000022">
    <property type="entry name" value="Receptor-like protein kinase 4"/>
    <property type="match status" value="1"/>
</dbReference>
<dbReference type="Gene3D" id="2.90.10.10">
    <property type="entry name" value="Bulb-type lectin domain"/>
    <property type="match status" value="1"/>
</dbReference>
<dbReference type="Gene3D" id="3.30.200.20">
    <property type="entry name" value="Phosphorylase Kinase, domain 1"/>
    <property type="match status" value="1"/>
</dbReference>
<dbReference type="Gene3D" id="1.10.510.10">
    <property type="entry name" value="Transferase(Phosphotransferase) domain 1"/>
    <property type="match status" value="1"/>
</dbReference>
<dbReference type="InterPro" id="IPR001480">
    <property type="entry name" value="Bulb-type_lectin_dom"/>
</dbReference>
<dbReference type="InterPro" id="IPR036426">
    <property type="entry name" value="Bulb-type_lectin_dom_sf"/>
</dbReference>
<dbReference type="InterPro" id="IPR011009">
    <property type="entry name" value="Kinase-like_dom_sf"/>
</dbReference>
<dbReference type="InterPro" id="IPR003609">
    <property type="entry name" value="Pan_app"/>
</dbReference>
<dbReference type="InterPro" id="IPR000719">
    <property type="entry name" value="Prot_kinase_dom"/>
</dbReference>
<dbReference type="InterPro" id="IPR000858">
    <property type="entry name" value="S_locus_glycoprot_dom"/>
</dbReference>
<dbReference type="InterPro" id="IPR008271">
    <property type="entry name" value="Ser/Thr_kinase_AS"/>
</dbReference>
<dbReference type="InterPro" id="IPR024171">
    <property type="entry name" value="SRK-like_kinase"/>
</dbReference>
<dbReference type="PANTHER" id="PTHR27002:SF975">
    <property type="entry name" value="PROTEIN KINASE DOMAIN-CONTAINING PROTEIN"/>
    <property type="match status" value="1"/>
</dbReference>
<dbReference type="PANTHER" id="PTHR27002">
    <property type="entry name" value="RECEPTOR-LIKE SERINE/THREONINE-PROTEIN KINASE SD1-8"/>
    <property type="match status" value="1"/>
</dbReference>
<dbReference type="Pfam" id="PF01453">
    <property type="entry name" value="B_lectin"/>
    <property type="match status" value="1"/>
</dbReference>
<dbReference type="Pfam" id="PF08276">
    <property type="entry name" value="PAN_2"/>
    <property type="match status" value="1"/>
</dbReference>
<dbReference type="Pfam" id="PF00069">
    <property type="entry name" value="Pkinase"/>
    <property type="match status" value="1"/>
</dbReference>
<dbReference type="Pfam" id="PF00954">
    <property type="entry name" value="S_locus_glycop"/>
    <property type="match status" value="1"/>
</dbReference>
<dbReference type="PIRSF" id="PIRSF000641">
    <property type="entry name" value="SRK"/>
    <property type="match status" value="1"/>
</dbReference>
<dbReference type="SMART" id="SM00108">
    <property type="entry name" value="B_lectin"/>
    <property type="match status" value="1"/>
</dbReference>
<dbReference type="SMART" id="SM00473">
    <property type="entry name" value="PAN_AP"/>
    <property type="match status" value="1"/>
</dbReference>
<dbReference type="SMART" id="SM00220">
    <property type="entry name" value="S_TKc"/>
    <property type="match status" value="1"/>
</dbReference>
<dbReference type="SUPFAM" id="SSF51110">
    <property type="entry name" value="alpha-D-mannose-specific plant lectins"/>
    <property type="match status" value="1"/>
</dbReference>
<dbReference type="SUPFAM" id="SSF56112">
    <property type="entry name" value="Protein kinase-like (PK-like)"/>
    <property type="match status" value="1"/>
</dbReference>
<dbReference type="PROSITE" id="PS50927">
    <property type="entry name" value="BULB_LECTIN"/>
    <property type="match status" value="1"/>
</dbReference>
<dbReference type="PROSITE" id="PS50948">
    <property type="entry name" value="PAN"/>
    <property type="match status" value="1"/>
</dbReference>
<dbReference type="PROSITE" id="PS50011">
    <property type="entry name" value="PROTEIN_KINASE_DOM"/>
    <property type="match status" value="1"/>
</dbReference>
<dbReference type="PROSITE" id="PS00108">
    <property type="entry name" value="PROTEIN_KINASE_ST"/>
    <property type="match status" value="1"/>
</dbReference>
<comment type="catalytic activity">
    <reaction>
        <text>L-seryl-[protein] + ATP = O-phospho-L-seryl-[protein] + ADP + H(+)</text>
        <dbReference type="Rhea" id="RHEA:17989"/>
        <dbReference type="Rhea" id="RHEA-COMP:9863"/>
        <dbReference type="Rhea" id="RHEA-COMP:11604"/>
        <dbReference type="ChEBI" id="CHEBI:15378"/>
        <dbReference type="ChEBI" id="CHEBI:29999"/>
        <dbReference type="ChEBI" id="CHEBI:30616"/>
        <dbReference type="ChEBI" id="CHEBI:83421"/>
        <dbReference type="ChEBI" id="CHEBI:456216"/>
        <dbReference type="EC" id="2.7.11.1"/>
    </reaction>
</comment>
<comment type="catalytic activity">
    <reaction>
        <text>L-threonyl-[protein] + ATP = O-phospho-L-threonyl-[protein] + ADP + H(+)</text>
        <dbReference type="Rhea" id="RHEA:46608"/>
        <dbReference type="Rhea" id="RHEA-COMP:11060"/>
        <dbReference type="Rhea" id="RHEA-COMP:11605"/>
        <dbReference type="ChEBI" id="CHEBI:15378"/>
        <dbReference type="ChEBI" id="CHEBI:30013"/>
        <dbReference type="ChEBI" id="CHEBI:30616"/>
        <dbReference type="ChEBI" id="CHEBI:61977"/>
        <dbReference type="ChEBI" id="CHEBI:456216"/>
        <dbReference type="EC" id="2.7.11.1"/>
    </reaction>
</comment>
<comment type="subcellular location">
    <subcellularLocation>
        <location evidence="1">Cell membrane</location>
        <topology evidence="1">Single-pass type I membrane protein</topology>
    </subcellularLocation>
</comment>
<comment type="alternative products">
    <event type="alternative splicing"/>
    <isoform>
        <id>Q9T058-1</id>
        <name>1</name>
        <sequence type="displayed"/>
    </isoform>
    <isoform>
        <id>Q9T058-2</id>
        <name>2</name>
        <sequence type="described" ref="VSP_040157 VSP_040158"/>
    </isoform>
</comment>
<comment type="similarity">
    <text evidence="5">Belongs to the protein kinase superfamily. Ser/Thr protein kinase family.</text>
</comment>
<feature type="signal peptide" evidence="3">
    <location>
        <begin position="1"/>
        <end position="26"/>
    </location>
</feature>
<feature type="chain" id="PRO_0000401327" description="G-type lectin S-receptor-like serine/threonine-protein kinase At4g11900">
    <location>
        <begin position="27"/>
        <end position="849"/>
    </location>
</feature>
<feature type="topological domain" description="Extracellular" evidence="3">
    <location>
        <begin position="27"/>
        <end position="466"/>
    </location>
</feature>
<feature type="transmembrane region" description="Helical" evidence="3">
    <location>
        <begin position="467"/>
        <end position="487"/>
    </location>
</feature>
<feature type="topological domain" description="Cytoplasmic" evidence="3">
    <location>
        <begin position="488"/>
        <end position="849"/>
    </location>
</feature>
<feature type="domain" description="Bulb-type lectin" evidence="4">
    <location>
        <begin position="27"/>
        <end position="180"/>
    </location>
</feature>
<feature type="domain" description="EGF-like">
    <location>
        <begin position="311"/>
        <end position="348"/>
    </location>
</feature>
<feature type="domain" description="PAN" evidence="6">
    <location>
        <begin position="368"/>
        <end position="447"/>
    </location>
</feature>
<feature type="domain" description="Protein kinase" evidence="5">
    <location>
        <begin position="537"/>
        <end position="822"/>
    </location>
</feature>
<feature type="region of interest" description="CaM-binding" evidence="1">
    <location>
        <begin position="626"/>
        <end position="643"/>
    </location>
</feature>
<feature type="active site" description="Proton acceptor" evidence="5 7">
    <location>
        <position position="662"/>
    </location>
</feature>
<feature type="binding site" evidence="5">
    <location>
        <begin position="543"/>
        <end position="551"/>
    </location>
    <ligand>
        <name>ATP</name>
        <dbReference type="ChEBI" id="CHEBI:30616"/>
    </ligand>
</feature>
<feature type="binding site" evidence="5">
    <location>
        <position position="565"/>
    </location>
    <ligand>
        <name>ATP</name>
        <dbReference type="ChEBI" id="CHEBI:30616"/>
    </ligand>
</feature>
<feature type="modified residue" description="Phosphoserine" evidence="2">
    <location>
        <position position="571"/>
    </location>
</feature>
<feature type="modified residue" description="Phosphoserine" evidence="2">
    <location>
        <position position="666"/>
    </location>
</feature>
<feature type="modified residue" description="Phosphoserine" evidence="2">
    <location>
        <position position="679"/>
    </location>
</feature>
<feature type="modified residue" description="Phosphothreonine" evidence="2">
    <location>
        <position position="696"/>
    </location>
</feature>
<feature type="modified residue" description="Phosphoserine" evidence="2">
    <location>
        <position position="837"/>
    </location>
</feature>
<feature type="modified residue" description="Phosphothreonine" evidence="2">
    <location>
        <position position="844"/>
    </location>
</feature>
<feature type="glycosylation site" description="N-linked (GlcNAc...) asparagine" evidence="3">
    <location>
        <position position="111"/>
    </location>
</feature>
<feature type="glycosylation site" description="N-linked (GlcNAc...) asparagine" evidence="3">
    <location>
        <position position="148"/>
    </location>
</feature>
<feature type="glycosylation site" description="N-linked (GlcNAc...) asparagine" evidence="3">
    <location>
        <position position="172"/>
    </location>
</feature>
<feature type="glycosylation site" description="N-linked (GlcNAc...) asparagine" evidence="3">
    <location>
        <position position="232"/>
    </location>
</feature>
<feature type="glycosylation site" description="N-linked (GlcNAc...) asparagine" evidence="3">
    <location>
        <position position="450"/>
    </location>
</feature>
<feature type="disulfide bond" evidence="1">
    <location>
        <begin position="315"/>
        <end position="327"/>
    </location>
</feature>
<feature type="disulfide bond" evidence="1">
    <location>
        <begin position="321"/>
        <end position="336"/>
    </location>
</feature>
<feature type="disulfide bond" evidence="1">
    <location>
        <begin position="401"/>
        <end position="421"/>
    </location>
</feature>
<feature type="disulfide bond" evidence="1">
    <location>
        <begin position="405"/>
        <end position="411"/>
    </location>
</feature>
<feature type="splice variant" id="VSP_040157" description="In isoform 2." evidence="8">
    <original>DSL</original>
    <variation>GEW</variation>
    <location>
        <begin position="624"/>
        <end position="626"/>
    </location>
</feature>
<feature type="splice variant" id="VSP_040158" description="In isoform 2." evidence="8">
    <location>
        <begin position="627"/>
        <end position="849"/>
    </location>
</feature>
<reference key="1">
    <citation type="journal article" date="1999" name="Nature">
        <title>Sequence and analysis of chromosome 4 of the plant Arabidopsis thaliana.</title>
        <authorList>
            <person name="Mayer K.F.X."/>
            <person name="Schueller C."/>
            <person name="Wambutt R."/>
            <person name="Murphy G."/>
            <person name="Volckaert G."/>
            <person name="Pohl T."/>
            <person name="Duesterhoeft A."/>
            <person name="Stiekema W."/>
            <person name="Entian K.-D."/>
            <person name="Terryn N."/>
            <person name="Harris B."/>
            <person name="Ansorge W."/>
            <person name="Brandt P."/>
            <person name="Grivell L.A."/>
            <person name="Rieger M."/>
            <person name="Weichselgartner M."/>
            <person name="de Simone V."/>
            <person name="Obermaier B."/>
            <person name="Mache R."/>
            <person name="Mueller M."/>
            <person name="Kreis M."/>
            <person name="Delseny M."/>
            <person name="Puigdomenech P."/>
            <person name="Watson M."/>
            <person name="Schmidtheini T."/>
            <person name="Reichert B."/>
            <person name="Portetelle D."/>
            <person name="Perez-Alonso M."/>
            <person name="Boutry M."/>
            <person name="Bancroft I."/>
            <person name="Vos P."/>
            <person name="Hoheisel J."/>
            <person name="Zimmermann W."/>
            <person name="Wedler H."/>
            <person name="Ridley P."/>
            <person name="Langham S.-A."/>
            <person name="McCullagh B."/>
            <person name="Bilham L."/>
            <person name="Robben J."/>
            <person name="van der Schueren J."/>
            <person name="Grymonprez B."/>
            <person name="Chuang Y.-J."/>
            <person name="Vandenbussche F."/>
            <person name="Braeken M."/>
            <person name="Weltjens I."/>
            <person name="Voet M."/>
            <person name="Bastiaens I."/>
            <person name="Aert R."/>
            <person name="Defoor E."/>
            <person name="Weitzenegger T."/>
            <person name="Bothe G."/>
            <person name="Ramsperger U."/>
            <person name="Hilbert H."/>
            <person name="Braun M."/>
            <person name="Holzer E."/>
            <person name="Brandt A."/>
            <person name="Peters S."/>
            <person name="van Staveren M."/>
            <person name="Dirkse W."/>
            <person name="Mooijman P."/>
            <person name="Klein Lankhorst R."/>
            <person name="Rose M."/>
            <person name="Hauf J."/>
            <person name="Koetter P."/>
            <person name="Berneiser S."/>
            <person name="Hempel S."/>
            <person name="Feldpausch M."/>
            <person name="Lamberth S."/>
            <person name="Van den Daele H."/>
            <person name="De Keyser A."/>
            <person name="Buysshaert C."/>
            <person name="Gielen J."/>
            <person name="Villarroel R."/>
            <person name="De Clercq R."/>
            <person name="van Montagu M."/>
            <person name="Rogers J."/>
            <person name="Cronin A."/>
            <person name="Quail M.A."/>
            <person name="Bray-Allen S."/>
            <person name="Clark L."/>
            <person name="Doggett J."/>
            <person name="Hall S."/>
            <person name="Kay M."/>
            <person name="Lennard N."/>
            <person name="McLay K."/>
            <person name="Mayes R."/>
            <person name="Pettett A."/>
            <person name="Rajandream M.A."/>
            <person name="Lyne M."/>
            <person name="Benes V."/>
            <person name="Rechmann S."/>
            <person name="Borkova D."/>
            <person name="Bloecker H."/>
            <person name="Scharfe M."/>
            <person name="Grimm M."/>
            <person name="Loehnert T.-H."/>
            <person name="Dose S."/>
            <person name="de Haan M."/>
            <person name="Maarse A.C."/>
            <person name="Schaefer M."/>
            <person name="Mueller-Auer S."/>
            <person name="Gabel C."/>
            <person name="Fuchs M."/>
            <person name="Fartmann B."/>
            <person name="Granderath K."/>
            <person name="Dauner D."/>
            <person name="Herzl A."/>
            <person name="Neumann S."/>
            <person name="Argiriou A."/>
            <person name="Vitale D."/>
            <person name="Liguori R."/>
            <person name="Piravandi E."/>
            <person name="Massenet O."/>
            <person name="Quigley F."/>
            <person name="Clabauld G."/>
            <person name="Muendlein A."/>
            <person name="Felber R."/>
            <person name="Schnabl S."/>
            <person name="Hiller R."/>
            <person name="Schmidt W."/>
            <person name="Lecharny A."/>
            <person name="Aubourg S."/>
            <person name="Chefdor F."/>
            <person name="Cooke R."/>
            <person name="Berger C."/>
            <person name="Monfort A."/>
            <person name="Casacuberta E."/>
            <person name="Gibbons T."/>
            <person name="Weber N."/>
            <person name="Vandenbol M."/>
            <person name="Bargues M."/>
            <person name="Terol J."/>
            <person name="Torres A."/>
            <person name="Perez-Perez A."/>
            <person name="Purnelle B."/>
            <person name="Bent E."/>
            <person name="Johnson S."/>
            <person name="Tacon D."/>
            <person name="Jesse T."/>
            <person name="Heijnen L."/>
            <person name="Schwarz S."/>
            <person name="Scholler P."/>
            <person name="Heber S."/>
            <person name="Francs P."/>
            <person name="Bielke C."/>
            <person name="Frishman D."/>
            <person name="Haase D."/>
            <person name="Lemcke K."/>
            <person name="Mewes H.-W."/>
            <person name="Stocker S."/>
            <person name="Zaccaria P."/>
            <person name="Bevan M."/>
            <person name="Wilson R.K."/>
            <person name="de la Bastide M."/>
            <person name="Habermann K."/>
            <person name="Parnell L."/>
            <person name="Dedhia N."/>
            <person name="Gnoj L."/>
            <person name="Schutz K."/>
            <person name="Huang E."/>
            <person name="Spiegel L."/>
            <person name="Sekhon M."/>
            <person name="Murray J."/>
            <person name="Sheet P."/>
            <person name="Cordes M."/>
            <person name="Abu-Threideh J."/>
            <person name="Stoneking T."/>
            <person name="Kalicki J."/>
            <person name="Graves T."/>
            <person name="Harmon G."/>
            <person name="Edwards J."/>
            <person name="Latreille P."/>
            <person name="Courtney L."/>
            <person name="Cloud J."/>
            <person name="Abbott A."/>
            <person name="Scott K."/>
            <person name="Johnson D."/>
            <person name="Minx P."/>
            <person name="Bentley D."/>
            <person name="Fulton B."/>
            <person name="Miller N."/>
            <person name="Greco T."/>
            <person name="Kemp K."/>
            <person name="Kramer J."/>
            <person name="Fulton L."/>
            <person name="Mardis E."/>
            <person name="Dante M."/>
            <person name="Pepin K."/>
            <person name="Hillier L.W."/>
            <person name="Nelson J."/>
            <person name="Spieth J."/>
            <person name="Ryan E."/>
            <person name="Andrews S."/>
            <person name="Geisel C."/>
            <person name="Layman D."/>
            <person name="Du H."/>
            <person name="Ali J."/>
            <person name="Berghoff A."/>
            <person name="Jones K."/>
            <person name="Drone K."/>
            <person name="Cotton M."/>
            <person name="Joshu C."/>
            <person name="Antonoiu B."/>
            <person name="Zidanic M."/>
            <person name="Strong C."/>
            <person name="Sun H."/>
            <person name="Lamar B."/>
            <person name="Yordan C."/>
            <person name="Ma P."/>
            <person name="Zhong J."/>
            <person name="Preston R."/>
            <person name="Vil D."/>
            <person name="Shekher M."/>
            <person name="Matero A."/>
            <person name="Shah R."/>
            <person name="Swaby I.K."/>
            <person name="O'Shaughnessy A."/>
            <person name="Rodriguez M."/>
            <person name="Hoffman J."/>
            <person name="Till S."/>
            <person name="Granat S."/>
            <person name="Shohdy N."/>
            <person name="Hasegawa A."/>
            <person name="Hameed A."/>
            <person name="Lodhi M."/>
            <person name="Johnson A."/>
            <person name="Chen E."/>
            <person name="Marra M.A."/>
            <person name="Martienssen R."/>
            <person name="McCombie W.R."/>
        </authorList>
    </citation>
    <scope>NUCLEOTIDE SEQUENCE [LARGE SCALE GENOMIC DNA]</scope>
    <source>
        <strain>cv. Columbia</strain>
    </source>
</reference>
<reference key="2">
    <citation type="journal article" date="2017" name="Plant J.">
        <title>Araport11: a complete reannotation of the Arabidopsis thaliana reference genome.</title>
        <authorList>
            <person name="Cheng C.Y."/>
            <person name="Krishnakumar V."/>
            <person name="Chan A.P."/>
            <person name="Thibaud-Nissen F."/>
            <person name="Schobel S."/>
            <person name="Town C.D."/>
        </authorList>
    </citation>
    <scope>GENOME REANNOTATION</scope>
    <source>
        <strain>cv. Columbia</strain>
    </source>
</reference>
<reference key="3">
    <citation type="submission" date="2004-09" db="EMBL/GenBank/DDBJ databases">
        <title>Large-scale analysis of RIKEN Arabidopsis full-length (RAFL) cDNAs.</title>
        <authorList>
            <person name="Totoki Y."/>
            <person name="Seki M."/>
            <person name="Ishida J."/>
            <person name="Nakajima M."/>
            <person name="Enju A."/>
            <person name="Kamiya A."/>
            <person name="Narusaka M."/>
            <person name="Shin-i T."/>
            <person name="Nakagawa M."/>
            <person name="Sakamoto N."/>
            <person name="Oishi K."/>
            <person name="Kohara Y."/>
            <person name="Kobayashi M."/>
            <person name="Toyoda A."/>
            <person name="Sakaki Y."/>
            <person name="Sakurai T."/>
            <person name="Iida K."/>
            <person name="Akiyama K."/>
            <person name="Satou M."/>
            <person name="Toyoda T."/>
            <person name="Konagaya A."/>
            <person name="Carninci P."/>
            <person name="Kawai J."/>
            <person name="Hayashizaki Y."/>
            <person name="Shinozaki K."/>
        </authorList>
    </citation>
    <scope>NUCLEOTIDE SEQUENCE [LARGE SCALE MRNA] (ISOFORM 2)</scope>
    <source>
        <strain>cv. Columbia</strain>
    </source>
</reference>
<keyword id="KW-0025">Alternative splicing</keyword>
<keyword id="KW-0067">ATP-binding</keyword>
<keyword id="KW-1003">Cell membrane</keyword>
<keyword id="KW-1015">Disulfide bond</keyword>
<keyword id="KW-0245">EGF-like domain</keyword>
<keyword id="KW-0325">Glycoprotein</keyword>
<keyword id="KW-0418">Kinase</keyword>
<keyword id="KW-0430">Lectin</keyword>
<keyword id="KW-0472">Membrane</keyword>
<keyword id="KW-0547">Nucleotide-binding</keyword>
<keyword id="KW-0597">Phosphoprotein</keyword>
<keyword id="KW-0675">Receptor</keyword>
<keyword id="KW-1185">Reference proteome</keyword>
<keyword id="KW-0723">Serine/threonine-protein kinase</keyword>
<keyword id="KW-0732">Signal</keyword>
<keyword id="KW-0808">Transferase</keyword>
<keyword id="KW-0812">Transmembrane</keyword>
<keyword id="KW-1133">Transmembrane helix</keyword>
<organism>
    <name type="scientific">Arabidopsis thaliana</name>
    <name type="common">Mouse-ear cress</name>
    <dbReference type="NCBI Taxonomy" id="3702"/>
    <lineage>
        <taxon>Eukaryota</taxon>
        <taxon>Viridiplantae</taxon>
        <taxon>Streptophyta</taxon>
        <taxon>Embryophyta</taxon>
        <taxon>Tracheophyta</taxon>
        <taxon>Spermatophyta</taxon>
        <taxon>Magnoliopsida</taxon>
        <taxon>eudicotyledons</taxon>
        <taxon>Gunneridae</taxon>
        <taxon>Pentapetalae</taxon>
        <taxon>rosids</taxon>
        <taxon>malvids</taxon>
        <taxon>Brassicales</taxon>
        <taxon>Brassicaceae</taxon>
        <taxon>Camelineae</taxon>
        <taxon>Arabidopsis</taxon>
    </lineage>
</organism>
<proteinExistence type="evidence at transcript level"/>
<gene>
    <name type="ordered locus">At4g11900</name>
    <name type="ORF">T26M18.110</name>
</gene>